<organism>
    <name type="scientific">Rhizobium radiobacter</name>
    <name type="common">Agrobacterium tumefaciens</name>
    <name type="synonym">Agrobacterium radiobacter</name>
    <dbReference type="NCBI Taxonomy" id="358"/>
    <lineage>
        <taxon>Bacteria</taxon>
        <taxon>Pseudomonadati</taxon>
        <taxon>Pseudomonadota</taxon>
        <taxon>Alphaproteobacteria</taxon>
        <taxon>Hyphomicrobiales</taxon>
        <taxon>Rhizobiaceae</taxon>
        <taxon>Rhizobium/Agrobacterium group</taxon>
        <taxon>Agrobacterium</taxon>
        <taxon>Agrobacterium tumefaciens complex</taxon>
    </lineage>
</organism>
<geneLocation type="plasmid">
    <name>pTiA6</name>
</geneLocation>
<gene>
    <name type="primary">virB4</name>
</gene>
<reference key="1">
    <citation type="journal article" date="1988" name="J. Biol. Chem.">
        <title>Characterization of the virB operon from an Agrobacterium tumefaciens Ti plasmid.</title>
        <authorList>
            <person name="Ward J.E."/>
            <person name="Akiyoshi D.E."/>
            <person name="Regier D."/>
            <person name="Datta A."/>
            <person name="Gordon M.P."/>
            <person name="Nester E.W."/>
        </authorList>
    </citation>
    <scope>NUCLEOTIDE SEQUENCE [GENOMIC DNA]</scope>
</reference>
<reference key="2">
    <citation type="journal article" date="1990" name="J. Biol. Chem.">
        <authorList>
            <person name="Ward J.E."/>
            <person name="Akiyoshi D.E."/>
            <person name="Regier D."/>
            <person name="Datta A."/>
            <person name="Gordon M.P."/>
            <person name="Nester E.W."/>
        </authorList>
    </citation>
    <scope>ERRATUM OF PUBMED:3281947</scope>
    <scope>SEQUENCE REVISION</scope>
</reference>
<evidence type="ECO:0000255" key="1"/>
<evidence type="ECO:0000305" key="2"/>
<protein>
    <recommendedName>
        <fullName>Protein virB4</fullName>
    </recommendedName>
</protein>
<feature type="signal peptide" evidence="1">
    <location>
        <begin position="1"/>
        <end position="38"/>
    </location>
</feature>
<feature type="chain" id="PRO_0000022665" description="Protein virB4">
    <location>
        <begin position="39"/>
        <end position="789"/>
    </location>
</feature>
<feature type="binding site" evidence="1">
    <location>
        <begin position="433"/>
        <end position="440"/>
    </location>
    <ligand>
        <name>ATP</name>
        <dbReference type="ChEBI" id="CHEBI:30616"/>
    </ligand>
</feature>
<name>VIRB4_RHIRD</name>
<comment type="function">
    <text>A possible function of virB4 might be to provide the energy, via hydrolysis of ATP, for translocation of virulence proteins of the transfer of a T-DNA-protein complex across the agrobacterium membrane.</text>
</comment>
<comment type="interaction">
    <interactant intactId="EBI-6509107">
        <id>P0A3W0</id>
    </interactant>
    <interactant intactId="EBI-6509119">
        <id>P09776</id>
        <label>virB2</label>
    </interactant>
    <organismsDiffer>false</organismsDiffer>
    <experiments>2</experiments>
</comment>
<comment type="similarity">
    <text evidence="2">Belongs to the TrbE/VirB4 family.</text>
</comment>
<comment type="sequence caution" evidence="2">
    <conflict type="erroneous initiation">
        <sequence resource="EMBL-CDS" id="AAA88649"/>
    </conflict>
</comment>
<keyword id="KW-0067">ATP-binding</keyword>
<keyword id="KW-0192">Crown gall tumor</keyword>
<keyword id="KW-0547">Nucleotide-binding</keyword>
<keyword id="KW-0614">Plasmid</keyword>
<keyword id="KW-0732">Signal</keyword>
<accession>P0A3W0</accession>
<accession>P05353</accession>
<accession>P05354</accession>
<accession>P09777</accession>
<dbReference type="EMBL" id="J03216">
    <property type="protein sequence ID" value="AAA88649.1"/>
    <property type="status" value="ALT_INIT"/>
    <property type="molecule type" value="Genomic_DNA"/>
</dbReference>
<dbReference type="PIR" id="A30402">
    <property type="entry name" value="B4AGA6"/>
</dbReference>
<dbReference type="RefSeq" id="NP_059802.1">
    <property type="nucleotide sequence ID" value="NC_002377.1"/>
</dbReference>
<dbReference type="RefSeq" id="WP_010892490.1">
    <property type="nucleotide sequence ID" value="NZ_QSNU01000012.1"/>
</dbReference>
<dbReference type="SMR" id="P0A3W0"/>
<dbReference type="DIP" id="DIP-29958N"/>
<dbReference type="IntAct" id="P0A3W0">
    <property type="interactions" value="2"/>
</dbReference>
<dbReference type="TCDB" id="3.A.7.1.1">
    <property type="family name" value="the type iv (conjugal dna-protein transfer or virb) secretory pathway (ivsp) family"/>
</dbReference>
<dbReference type="OrthoDB" id="9816422at2"/>
<dbReference type="GO" id="GO:0005524">
    <property type="term" value="F:ATP binding"/>
    <property type="evidence" value="ECO:0007669"/>
    <property type="project" value="UniProtKB-KW"/>
</dbReference>
<dbReference type="Gene3D" id="3.40.50.300">
    <property type="entry name" value="P-loop containing nucleotide triphosphate hydrolases"/>
    <property type="match status" value="1"/>
</dbReference>
<dbReference type="InterPro" id="IPR004346">
    <property type="entry name" value="CagE_TrbE_VirB"/>
</dbReference>
<dbReference type="InterPro" id="IPR018145">
    <property type="entry name" value="CagE_TrbE_VirB_cntrl_dom"/>
</dbReference>
<dbReference type="InterPro" id="IPR027417">
    <property type="entry name" value="P-loop_NTPase"/>
</dbReference>
<dbReference type="InterPro" id="IPR051162">
    <property type="entry name" value="T4SS_component"/>
</dbReference>
<dbReference type="NCBIfam" id="NF010427">
    <property type="entry name" value="PRK13853.1"/>
    <property type="match status" value="1"/>
</dbReference>
<dbReference type="NCBIfam" id="TIGR00929">
    <property type="entry name" value="VirB4_CagE"/>
    <property type="match status" value="1"/>
</dbReference>
<dbReference type="PANTHER" id="PTHR30121:SF12">
    <property type="entry name" value="TYPE IV SECRETION SYSTEM PROTEIN CAGE"/>
    <property type="match status" value="1"/>
</dbReference>
<dbReference type="PANTHER" id="PTHR30121">
    <property type="entry name" value="UNCHARACTERIZED PROTEIN YJGR-RELATED"/>
    <property type="match status" value="1"/>
</dbReference>
<dbReference type="Pfam" id="PF03135">
    <property type="entry name" value="CagE_TrbE_VirB"/>
    <property type="match status" value="1"/>
</dbReference>
<dbReference type="SUPFAM" id="SSF52540">
    <property type="entry name" value="P-loop containing nucleoside triphosphate hydrolases"/>
    <property type="match status" value="1"/>
</dbReference>
<sequence>MLGASGTTERSGEIYLPYIGHLSDHIVLLEDGSIMSIARIDGVAFELEEIEMRNARCRAFNTLLRNIADDHVSIYAHLVRHADVPSSAPRHFRSVFAASLNEAFEQRVLSGQLLRNDHFLTLIVYPQAALGKVKRRFTKLSGKRENDLAGQIRNMEDLWHVVAGSLKAYGLHRLGIREKQGVLFTEIGEALRLIMTGRFTPVPVVSGSLGASIYTDRVICGKRGLEIRTPKDSYVGSIYSFREYPAKTRPGMLNALLSLDFPLVLTQSFSFLTRPQAHAKLSLKSSQMLSSGDKAVTQIGKLSEAEDALASNEFVMGSHHLSLCVYADDLNSLGDRGARARTRMADAGAVVVQEGIGMEAAYWSQLPGNFKWRTRPGAITSRNFAGFVSFENFPEGASSGHWGTAIARFRTNGGTPFDYIPHEHDVGMTAIFGPIGRGKTTLMMFVLAMLEQSMVDRAGTVVFFDKDRGGELLVRATGGTYLALRRGTPSGLAPLRGLENTAASHDFLREWIVALIESDGRGGISPEENRRLVRGIHRQLSFDPQMRSIAGLREFLLHGPAEGAGARLQRWCRGHALGWAFDGEVDEVKLDPSITGFDMTHLLEYEEVCAPAAAYLLHRIGAMIDGRRFVMSCDEFRAYLLNPKFSAVVDKFLLTVRKNNGMLILATQQPEHVLESPLGASLVAQCMTKIFYPSPTADRSAYIDGLKCTEKEFQAIREDMTVGSRKFLLKRESGSVICEFDLRDMREYVAVLSGRANTVRFAARLREAQEGNSSGWLSEFMARHHEAED</sequence>
<proteinExistence type="evidence at protein level"/>